<keyword id="KW-0240">DNA-directed RNA polymerase</keyword>
<keyword id="KW-0548">Nucleotidyltransferase</keyword>
<keyword id="KW-0804">Transcription</keyword>
<keyword id="KW-0808">Transferase</keyword>
<comment type="function">
    <text evidence="1">Promotes RNA polymerase assembly. Latches the N- and C-terminal regions of the beta' subunit thereby facilitating its interaction with the beta and alpha subunits.</text>
</comment>
<comment type="catalytic activity">
    <reaction evidence="1">
        <text>RNA(n) + a ribonucleoside 5'-triphosphate = RNA(n+1) + diphosphate</text>
        <dbReference type="Rhea" id="RHEA:21248"/>
        <dbReference type="Rhea" id="RHEA-COMP:14527"/>
        <dbReference type="Rhea" id="RHEA-COMP:17342"/>
        <dbReference type="ChEBI" id="CHEBI:33019"/>
        <dbReference type="ChEBI" id="CHEBI:61557"/>
        <dbReference type="ChEBI" id="CHEBI:140395"/>
        <dbReference type="EC" id="2.7.7.6"/>
    </reaction>
</comment>
<comment type="subunit">
    <text evidence="1">The RNAP catalytic core consists of 2 alpha, 1 beta, 1 beta' and 1 omega subunit. When a sigma factor is associated with the core the holoenzyme is formed, which can initiate transcription.</text>
</comment>
<comment type="similarity">
    <text evidence="1">Belongs to the RNA polymerase subunit omega family.</text>
</comment>
<organism>
    <name type="scientific">Rhizobium rhizogenes (strain K84 / ATCC BAA-868)</name>
    <name type="common">Agrobacterium radiobacter</name>
    <dbReference type="NCBI Taxonomy" id="311403"/>
    <lineage>
        <taxon>Bacteria</taxon>
        <taxon>Pseudomonadati</taxon>
        <taxon>Pseudomonadota</taxon>
        <taxon>Alphaproteobacteria</taxon>
        <taxon>Hyphomicrobiales</taxon>
        <taxon>Rhizobiaceae</taxon>
        <taxon>Rhizobium/Agrobacterium group</taxon>
        <taxon>Rhizobium</taxon>
    </lineage>
</organism>
<sequence>MARVTVEDCIDKVENRFELVLLASHRARLISQGSSITIDRDNDKNPVVALREIADETLSPDDLKEDLIHSLQKHVEIDEPEPDPASLLAAGGNASASGDEEEDAPEAVTFDQMSEEELLAGIEGLVPPEKSDDY</sequence>
<evidence type="ECO:0000255" key="1">
    <source>
        <dbReference type="HAMAP-Rule" id="MF_00366"/>
    </source>
</evidence>
<evidence type="ECO:0000256" key="2">
    <source>
        <dbReference type="SAM" id="MobiDB-lite"/>
    </source>
</evidence>
<gene>
    <name evidence="1" type="primary">rpoZ</name>
    <name type="ordered locus">Arad_1586</name>
</gene>
<dbReference type="EC" id="2.7.7.6" evidence="1"/>
<dbReference type="EMBL" id="CP000628">
    <property type="protein sequence ID" value="ACM25989.1"/>
    <property type="molecule type" value="Genomic_DNA"/>
</dbReference>
<dbReference type="RefSeq" id="WP_007693102.1">
    <property type="nucleotide sequence ID" value="NC_011985.1"/>
</dbReference>
<dbReference type="SMR" id="B9JC68"/>
<dbReference type="STRING" id="311403.Arad_1586"/>
<dbReference type="GeneID" id="86847867"/>
<dbReference type="KEGG" id="ara:Arad_1586"/>
<dbReference type="eggNOG" id="COG1758">
    <property type="taxonomic scope" value="Bacteria"/>
</dbReference>
<dbReference type="HOGENOM" id="CLU_125406_2_0_5"/>
<dbReference type="Proteomes" id="UP000001600">
    <property type="component" value="Chromosome 1"/>
</dbReference>
<dbReference type="GO" id="GO:0000428">
    <property type="term" value="C:DNA-directed RNA polymerase complex"/>
    <property type="evidence" value="ECO:0007669"/>
    <property type="project" value="UniProtKB-KW"/>
</dbReference>
<dbReference type="GO" id="GO:0003677">
    <property type="term" value="F:DNA binding"/>
    <property type="evidence" value="ECO:0007669"/>
    <property type="project" value="UniProtKB-UniRule"/>
</dbReference>
<dbReference type="GO" id="GO:0003899">
    <property type="term" value="F:DNA-directed RNA polymerase activity"/>
    <property type="evidence" value="ECO:0007669"/>
    <property type="project" value="UniProtKB-UniRule"/>
</dbReference>
<dbReference type="GO" id="GO:0006351">
    <property type="term" value="P:DNA-templated transcription"/>
    <property type="evidence" value="ECO:0007669"/>
    <property type="project" value="UniProtKB-UniRule"/>
</dbReference>
<dbReference type="Gene3D" id="3.90.940.10">
    <property type="match status" value="1"/>
</dbReference>
<dbReference type="HAMAP" id="MF_00366">
    <property type="entry name" value="RNApol_bact_RpoZ"/>
    <property type="match status" value="1"/>
</dbReference>
<dbReference type="InterPro" id="IPR003716">
    <property type="entry name" value="DNA-dir_RNA_pol_omega"/>
</dbReference>
<dbReference type="InterPro" id="IPR006110">
    <property type="entry name" value="Pol_omega/Rpo6/RPB6"/>
</dbReference>
<dbReference type="InterPro" id="IPR036161">
    <property type="entry name" value="RPB6/omega-like_sf"/>
</dbReference>
<dbReference type="NCBIfam" id="TIGR00690">
    <property type="entry name" value="rpoZ"/>
    <property type="match status" value="1"/>
</dbReference>
<dbReference type="PANTHER" id="PTHR34476">
    <property type="entry name" value="DNA-DIRECTED RNA POLYMERASE SUBUNIT OMEGA"/>
    <property type="match status" value="1"/>
</dbReference>
<dbReference type="PANTHER" id="PTHR34476:SF1">
    <property type="entry name" value="DNA-DIRECTED RNA POLYMERASE SUBUNIT OMEGA"/>
    <property type="match status" value="1"/>
</dbReference>
<dbReference type="Pfam" id="PF01192">
    <property type="entry name" value="RNA_pol_Rpb6"/>
    <property type="match status" value="1"/>
</dbReference>
<dbReference type="SMART" id="SM01409">
    <property type="entry name" value="RNA_pol_Rpb6"/>
    <property type="match status" value="1"/>
</dbReference>
<dbReference type="SUPFAM" id="SSF63562">
    <property type="entry name" value="RPB6/omega subunit-like"/>
    <property type="match status" value="1"/>
</dbReference>
<name>RPOZ_RHIR8</name>
<reference key="1">
    <citation type="journal article" date="2009" name="J. Bacteriol.">
        <title>Genome sequences of three Agrobacterium biovars help elucidate the evolution of multichromosome genomes in bacteria.</title>
        <authorList>
            <person name="Slater S.C."/>
            <person name="Goldman B.S."/>
            <person name="Goodner B."/>
            <person name="Setubal J.C."/>
            <person name="Farrand S.K."/>
            <person name="Nester E.W."/>
            <person name="Burr T.J."/>
            <person name="Banta L."/>
            <person name="Dickerman A.W."/>
            <person name="Paulsen I."/>
            <person name="Otten L."/>
            <person name="Suen G."/>
            <person name="Welch R."/>
            <person name="Almeida N.F."/>
            <person name="Arnold F."/>
            <person name="Burton O.T."/>
            <person name="Du Z."/>
            <person name="Ewing A."/>
            <person name="Godsy E."/>
            <person name="Heisel S."/>
            <person name="Houmiel K.L."/>
            <person name="Jhaveri J."/>
            <person name="Lu J."/>
            <person name="Miller N.M."/>
            <person name="Norton S."/>
            <person name="Chen Q."/>
            <person name="Phoolcharoen W."/>
            <person name="Ohlin V."/>
            <person name="Ondrusek D."/>
            <person name="Pride N."/>
            <person name="Stricklin S.L."/>
            <person name="Sun J."/>
            <person name="Wheeler C."/>
            <person name="Wilson L."/>
            <person name="Zhu H."/>
            <person name="Wood D.W."/>
        </authorList>
    </citation>
    <scope>NUCLEOTIDE SEQUENCE [LARGE SCALE GENOMIC DNA]</scope>
    <source>
        <strain>K84 / ATCC BAA-868</strain>
    </source>
</reference>
<proteinExistence type="inferred from homology"/>
<protein>
    <recommendedName>
        <fullName evidence="1">DNA-directed RNA polymerase subunit omega</fullName>
        <shortName evidence="1">RNAP omega subunit</shortName>
        <ecNumber evidence="1">2.7.7.6</ecNumber>
    </recommendedName>
    <alternativeName>
        <fullName evidence="1">RNA polymerase omega subunit</fullName>
    </alternativeName>
    <alternativeName>
        <fullName evidence="1">Transcriptase subunit omega</fullName>
    </alternativeName>
</protein>
<accession>B9JC68</accession>
<feature type="chain" id="PRO_1000133711" description="DNA-directed RNA polymerase subunit omega">
    <location>
        <begin position="1"/>
        <end position="134"/>
    </location>
</feature>
<feature type="region of interest" description="Disordered" evidence="2">
    <location>
        <begin position="77"/>
        <end position="108"/>
    </location>
</feature>
<feature type="compositionally biased region" description="Low complexity" evidence="2">
    <location>
        <begin position="85"/>
        <end position="97"/>
    </location>
</feature>